<accession>P35585</accession>
<feature type="initiator methionine" description="Removed" evidence="3">
    <location>
        <position position="1"/>
    </location>
</feature>
<feature type="chain" id="PRO_0000193771" description="AP-1 complex subunit mu-1">
    <location>
        <begin position="2"/>
        <end position="423"/>
    </location>
</feature>
<feature type="domain" description="MHD" evidence="4">
    <location>
        <begin position="168"/>
        <end position="421"/>
    </location>
</feature>
<feature type="modified residue" description="N-acetylserine" evidence="3">
    <location>
        <position position="2"/>
    </location>
</feature>
<feature type="modified residue" description="Phosphothreonine" evidence="6 7">
    <location>
        <position position="152"/>
    </location>
</feature>
<feature type="modified residue" description="Phosphothreonine" evidence="6 7">
    <location>
        <position position="154"/>
    </location>
</feature>
<feature type="modified residue" description="Phosphothreonine" evidence="2">
    <location>
        <position position="223"/>
    </location>
</feature>
<feature type="strand" evidence="9">
    <location>
        <begin position="4"/>
        <end position="9"/>
    </location>
</feature>
<feature type="strand" evidence="9">
    <location>
        <begin position="15"/>
        <end position="22"/>
    </location>
</feature>
<feature type="helix" evidence="9">
    <location>
        <begin position="29"/>
        <end position="32"/>
    </location>
</feature>
<feature type="helix" evidence="9">
    <location>
        <begin position="33"/>
        <end position="42"/>
    </location>
</feature>
<feature type="strand" evidence="9">
    <location>
        <begin position="48"/>
        <end position="52"/>
    </location>
</feature>
<feature type="strand" evidence="9">
    <location>
        <begin position="55"/>
        <end position="61"/>
    </location>
</feature>
<feature type="strand" evidence="9">
    <location>
        <begin position="66"/>
        <end position="73"/>
    </location>
</feature>
<feature type="helix" evidence="9">
    <location>
        <begin position="77"/>
        <end position="94"/>
    </location>
</feature>
<feature type="strand" evidence="9">
    <location>
        <begin position="95"/>
        <end position="97"/>
    </location>
</feature>
<feature type="helix" evidence="9">
    <location>
        <begin position="101"/>
        <end position="105"/>
    </location>
</feature>
<feature type="helix" evidence="9">
    <location>
        <begin position="107"/>
        <end position="117"/>
    </location>
</feature>
<feature type="helix" evidence="9">
    <location>
        <begin position="128"/>
        <end position="131"/>
    </location>
</feature>
<feature type="turn" evidence="9">
    <location>
        <begin position="132"/>
        <end position="134"/>
    </location>
</feature>
<feature type="helix" evidence="9">
    <location>
        <begin position="151"/>
        <end position="153"/>
    </location>
</feature>
<feature type="strand" evidence="8">
    <location>
        <begin position="155"/>
        <end position="157"/>
    </location>
</feature>
<feature type="strand" evidence="9">
    <location>
        <begin position="170"/>
        <end position="183"/>
    </location>
</feature>
<feature type="strand" evidence="9">
    <location>
        <begin position="185"/>
        <end position="187"/>
    </location>
</feature>
<feature type="strand" evidence="9">
    <location>
        <begin position="189"/>
        <end position="203"/>
    </location>
</feature>
<feature type="strand" evidence="8">
    <location>
        <begin position="205"/>
        <end position="207"/>
    </location>
</feature>
<feature type="strand" evidence="9">
    <location>
        <begin position="209"/>
        <end position="214"/>
    </location>
</feature>
<feature type="helix" evidence="9">
    <location>
        <begin position="217"/>
        <end position="223"/>
    </location>
</feature>
<feature type="strand" evidence="9">
    <location>
        <begin position="234"/>
        <end position="238"/>
    </location>
</feature>
<feature type="helix" evidence="9">
    <location>
        <begin position="244"/>
        <end position="250"/>
    </location>
</feature>
<feature type="strand" evidence="9">
    <location>
        <begin position="253"/>
        <end position="255"/>
    </location>
</feature>
<feature type="strand" evidence="9">
    <location>
        <begin position="259"/>
        <end position="270"/>
    </location>
</feature>
<feature type="strand" evidence="9">
    <location>
        <begin position="276"/>
        <end position="286"/>
    </location>
</feature>
<feature type="turn" evidence="9">
    <location>
        <begin position="287"/>
        <end position="289"/>
    </location>
</feature>
<feature type="strand" evidence="9">
    <location>
        <begin position="290"/>
        <end position="299"/>
    </location>
</feature>
<feature type="strand" evidence="9">
    <location>
        <begin position="306"/>
        <end position="315"/>
    </location>
</feature>
<feature type="strand" evidence="9">
    <location>
        <begin position="321"/>
        <end position="335"/>
    </location>
</feature>
<feature type="turn" evidence="9">
    <location>
        <begin position="336"/>
        <end position="339"/>
    </location>
</feature>
<feature type="strand" evidence="9">
    <location>
        <begin position="340"/>
        <end position="349"/>
    </location>
</feature>
<feature type="strand" evidence="9">
    <location>
        <begin position="353"/>
        <end position="361"/>
    </location>
</feature>
<feature type="strand" evidence="9">
    <location>
        <begin position="381"/>
        <end position="384"/>
    </location>
</feature>
<feature type="strand" evidence="9">
    <location>
        <begin position="392"/>
        <end position="398"/>
    </location>
</feature>
<feature type="strand" evidence="9">
    <location>
        <begin position="406"/>
        <end position="420"/>
    </location>
</feature>
<keyword id="KW-0002">3D-structure</keyword>
<keyword id="KW-0007">Acetylation</keyword>
<keyword id="KW-0968">Cytoplasmic vesicle</keyword>
<keyword id="KW-0333">Golgi apparatus</keyword>
<keyword id="KW-0472">Membrane</keyword>
<keyword id="KW-0597">Phosphoprotein</keyword>
<keyword id="KW-0653">Protein transport</keyword>
<keyword id="KW-1185">Reference proteome</keyword>
<keyword id="KW-0813">Transport</keyword>
<protein>
    <recommendedName>
        <fullName>AP-1 complex subunit mu-1</fullName>
    </recommendedName>
    <alternativeName>
        <fullName>AP-mu chain family member mu1A</fullName>
    </alternativeName>
    <alternativeName>
        <fullName>Adaptor protein complex AP-1 subunit mu-1</fullName>
    </alternativeName>
    <alternativeName>
        <fullName>Adaptor-related protein complex 1 subunit mu-1</fullName>
    </alternativeName>
    <alternativeName>
        <fullName>Clathrin assembly protein complex 1 mu-1 medium chain 1</fullName>
    </alternativeName>
    <alternativeName>
        <fullName>Clathrin coat assembly protein AP47</fullName>
    </alternativeName>
    <alternativeName>
        <fullName>Clathrin coat-associated protein AP47</fullName>
    </alternativeName>
    <alternativeName>
        <fullName>Golgi adaptor HA1/AP1 adaptin mu-1 subunit</fullName>
    </alternativeName>
    <alternativeName>
        <fullName>Mu-adaptin 1</fullName>
    </alternativeName>
    <alternativeName>
        <fullName>Mu1A-adaptin</fullName>
    </alternativeName>
</protein>
<sequence length="423" mass="48543">MSASAVYVLDLKGKVLICRNYRGDVDMSEVEHFMPILMEKEEEGMLSPILAHGGVRFMWIKHNNLYLVATSKKNACVSLVFSFLYKVVQVFSEYFKELEEESIRDNFVIIYELLDELMDFGYPQTTDSKILQEYITQEGHKLETGAPRPPATVTNAVSWRSEGIKYRKNEVFLDVIEAVNLLVSANGNVLRSEIVGSIKMRVFLSGMPELRLGLNDKVLFDNTGRGKSKSVELEDVKFHQCVRLSRFENDRTISFIPPDGEFELMSYRLNTHVKPLIWIESVIEKHSHSRIEYMVKAKSQFKRRSTANNVEIHIPVPNDADSPKFKTTVGSVKWVPENSEIVWSVKSFPGGKEYLMRAHFGLPSVEAEDKEGKPPISVKFEIPYFTTSGIQVRYLKIIEKSGYQALPWVRYITQNGDYQLRTQ</sequence>
<organism>
    <name type="scientific">Mus musculus</name>
    <name type="common">Mouse</name>
    <dbReference type="NCBI Taxonomy" id="10090"/>
    <lineage>
        <taxon>Eukaryota</taxon>
        <taxon>Metazoa</taxon>
        <taxon>Chordata</taxon>
        <taxon>Craniata</taxon>
        <taxon>Vertebrata</taxon>
        <taxon>Euteleostomi</taxon>
        <taxon>Mammalia</taxon>
        <taxon>Eutheria</taxon>
        <taxon>Euarchontoglires</taxon>
        <taxon>Glires</taxon>
        <taxon>Rodentia</taxon>
        <taxon>Myomorpha</taxon>
        <taxon>Muroidea</taxon>
        <taxon>Muridae</taxon>
        <taxon>Murinae</taxon>
        <taxon>Mus</taxon>
        <taxon>Mus</taxon>
    </lineage>
</organism>
<comment type="function">
    <text>Subunit of clathrin-associated adaptor protein complex 1 that plays a role in protein sorting in the trans-Golgi network (TGN) and endosomes. The AP complexes mediate the recruitment of clathrin to membranes and the recognition of sorting signals within the cytosolic tails of transmembrane cargo molecules.</text>
</comment>
<comment type="subunit">
    <text evidence="1">Adaptor protein complex 1 (AP-1) is a heterotetramer composed of two large adaptins (gamma-type subunit AP1G1 and beta-type subunit AP1B1), a medium adaptin (mu-type subunit AP1M1 or AP1M2) and a small adaptin (sigma-type subunit AP1S1 or AP1S2 or AP1S3). Interacts with MARCHF11 (By similarity).</text>
</comment>
<comment type="interaction">
    <interactant intactId="EBI-1040251">
        <id>P35585</id>
    </interactant>
    <interactant intactId="EBI-1040262">
        <id>P22892</id>
        <label>Ap1g1</label>
    </interactant>
    <organismsDiffer>false</organismsDiffer>
    <experiments>6</experiments>
</comment>
<comment type="interaction">
    <interactant intactId="EBI-1040251">
        <id>P35585</id>
    </interactant>
    <interactant intactId="EBI-1171303">
        <id>Q10567</id>
        <label>AP1B1</label>
    </interactant>
    <organismsDiffer>true</organismsDiffer>
    <experiments>5</experiments>
</comment>
<comment type="interaction">
    <interactant intactId="EBI-1040251">
        <id>P35585</id>
    </interactant>
    <interactant intactId="EBI-2476339">
        <id>Q10589</id>
        <label>BST2</label>
    </interactant>
    <organismsDiffer>true</organismsDiffer>
    <experiments>2</experiments>
</comment>
<comment type="subcellular location">
    <subcellularLocation>
        <location>Golgi apparatus</location>
    </subcellularLocation>
    <subcellularLocation>
        <location>Cytoplasmic vesicle</location>
        <location>Clathrin-coated vesicle membrane</location>
        <topology>Peripheral membrane protein</topology>
        <orientation>Cytoplasmic side</orientation>
    </subcellularLocation>
    <text>Component of the coat surrounding the cytoplasmic face of coated vesicles located at the Golgi complex.</text>
</comment>
<comment type="PTM">
    <text evidence="1">Phosphorylation of membrane-bound AP1M1/AP1M2 increases its affinity for sorting signals.</text>
</comment>
<comment type="similarity">
    <text evidence="5">Belongs to the adaptor complexes medium subunit family.</text>
</comment>
<name>AP1M1_MOUSE</name>
<evidence type="ECO:0000250" key="1"/>
<evidence type="ECO:0000250" key="2">
    <source>
        <dbReference type="UniProtKB" id="Q32Q06"/>
    </source>
</evidence>
<evidence type="ECO:0000250" key="3">
    <source>
        <dbReference type="UniProtKB" id="Q9BXS5"/>
    </source>
</evidence>
<evidence type="ECO:0000255" key="4">
    <source>
        <dbReference type="PROSITE-ProRule" id="PRU00404"/>
    </source>
</evidence>
<evidence type="ECO:0000305" key="5"/>
<evidence type="ECO:0007744" key="6">
    <source>
    </source>
</evidence>
<evidence type="ECO:0007744" key="7">
    <source>
    </source>
</evidence>
<evidence type="ECO:0007829" key="8">
    <source>
        <dbReference type="PDB" id="4P6Z"/>
    </source>
</evidence>
<evidence type="ECO:0007829" key="9">
    <source>
        <dbReference type="PDB" id="7R4H"/>
    </source>
</evidence>
<reference key="1">
    <citation type="journal article" date="1991" name="Eur. J. Biochem.">
        <title>The medium chains of the mammalian clathrin-associated proteins have a homolog in yeast.</title>
        <authorList>
            <person name="Nakayama Y."/>
            <person name="Goebl M."/>
            <person name="O'Brine Greco B."/>
            <person name="Lemmon S."/>
            <person name="Pingchang C.E."/>
            <person name="Kirchhausen T."/>
        </authorList>
    </citation>
    <scope>NUCLEOTIDE SEQUENCE [MRNA]</scope>
</reference>
<reference key="2">
    <citation type="journal article" date="1999" name="Cytogenet. Cell Genet.">
        <title>Genomic structure and chromosome mapping of the genes encoding clathrin-associated adaptor medium chains mu1A (Ap1m1) and mu1B (Ap1m2).</title>
        <authorList>
            <person name="Nakatsu F."/>
            <person name="Kadohira T."/>
            <person name="Gilbert D.J."/>
            <person name="Jenkins N.A."/>
            <person name="Kakuta H."/>
            <person name="Copeland N.G."/>
            <person name="Saito T."/>
            <person name="Ohno H."/>
        </authorList>
    </citation>
    <scope>NUCLEOTIDE SEQUENCE [GENOMIC DNA]</scope>
</reference>
<reference key="3">
    <citation type="journal article" date="2004" name="Genome Res.">
        <title>The status, quality, and expansion of the NIH full-length cDNA project: the Mammalian Gene Collection (MGC).</title>
        <authorList>
            <consortium name="The MGC Project Team"/>
        </authorList>
    </citation>
    <scope>NUCLEOTIDE SEQUENCE [LARGE SCALE MRNA]</scope>
    <source>
        <tissue>Mammary gland</tissue>
    </source>
</reference>
<reference key="4">
    <citation type="journal article" date="2007" name="Proc. Natl. Acad. Sci. U.S.A.">
        <title>Large-scale phosphorylation analysis of mouse liver.</title>
        <authorList>
            <person name="Villen J."/>
            <person name="Beausoleil S.A."/>
            <person name="Gerber S.A."/>
            <person name="Gygi S.P."/>
        </authorList>
    </citation>
    <scope>PHOSPHORYLATION [LARGE SCALE ANALYSIS] AT THR-152 AND THR-154</scope>
    <scope>IDENTIFICATION BY MASS SPECTROMETRY [LARGE SCALE ANALYSIS]</scope>
    <source>
        <tissue>Liver</tissue>
    </source>
</reference>
<reference key="5">
    <citation type="journal article" date="2010" name="Cell">
        <title>A tissue-specific atlas of mouse protein phosphorylation and expression.</title>
        <authorList>
            <person name="Huttlin E.L."/>
            <person name="Jedrychowski M.P."/>
            <person name="Elias J.E."/>
            <person name="Goswami T."/>
            <person name="Rad R."/>
            <person name="Beausoleil S.A."/>
            <person name="Villen J."/>
            <person name="Haas W."/>
            <person name="Sowa M.E."/>
            <person name="Gygi S.P."/>
        </authorList>
    </citation>
    <scope>PHOSPHORYLATION [LARGE SCALE ANALYSIS] AT THR-152 AND THR-154</scope>
    <scope>IDENTIFICATION BY MASS SPECTROMETRY [LARGE SCALE ANALYSIS]</scope>
    <source>
        <tissue>Brain</tissue>
        <tissue>Brown adipose tissue</tissue>
        <tissue>Heart</tissue>
        <tissue>Kidney</tissue>
        <tissue>Liver</tissue>
        <tissue>Lung</tissue>
        <tissue>Pancreas</tissue>
        <tissue>Spleen</tissue>
        <tissue>Testis</tissue>
    </source>
</reference>
<gene>
    <name type="primary">Ap1m1</name>
    <name type="synonym">Cltnm</name>
</gene>
<proteinExistence type="evidence at protein level"/>
<dbReference type="EMBL" id="M62419">
    <property type="protein sequence ID" value="AAA37244.1"/>
    <property type="molecule type" value="mRNA"/>
</dbReference>
<dbReference type="EMBL" id="AF139405">
    <property type="protein sequence ID" value="AAF61814.1"/>
    <property type="molecule type" value="Genomic_DNA"/>
</dbReference>
<dbReference type="EMBL" id="AF139394">
    <property type="protein sequence ID" value="AAF61814.1"/>
    <property type="status" value="JOINED"/>
    <property type="molecule type" value="Genomic_DNA"/>
</dbReference>
<dbReference type="EMBL" id="AF139395">
    <property type="protein sequence ID" value="AAF61814.1"/>
    <property type="status" value="JOINED"/>
    <property type="molecule type" value="Genomic_DNA"/>
</dbReference>
<dbReference type="EMBL" id="AF139396">
    <property type="protein sequence ID" value="AAF61814.1"/>
    <property type="status" value="JOINED"/>
    <property type="molecule type" value="Genomic_DNA"/>
</dbReference>
<dbReference type="EMBL" id="AF139397">
    <property type="protein sequence ID" value="AAF61814.1"/>
    <property type="status" value="JOINED"/>
    <property type="molecule type" value="Genomic_DNA"/>
</dbReference>
<dbReference type="EMBL" id="AF139398">
    <property type="protein sequence ID" value="AAF61814.1"/>
    <property type="status" value="JOINED"/>
    <property type="molecule type" value="Genomic_DNA"/>
</dbReference>
<dbReference type="EMBL" id="AF139399">
    <property type="protein sequence ID" value="AAF61814.1"/>
    <property type="status" value="JOINED"/>
    <property type="molecule type" value="Genomic_DNA"/>
</dbReference>
<dbReference type="EMBL" id="AF139400">
    <property type="protein sequence ID" value="AAF61814.1"/>
    <property type="status" value="JOINED"/>
    <property type="molecule type" value="Genomic_DNA"/>
</dbReference>
<dbReference type="EMBL" id="AF139401">
    <property type="protein sequence ID" value="AAF61814.1"/>
    <property type="status" value="JOINED"/>
    <property type="molecule type" value="Genomic_DNA"/>
</dbReference>
<dbReference type="EMBL" id="AF139402">
    <property type="protein sequence ID" value="AAF61814.1"/>
    <property type="status" value="JOINED"/>
    <property type="molecule type" value="Genomic_DNA"/>
</dbReference>
<dbReference type="EMBL" id="AF139403">
    <property type="protein sequence ID" value="AAF61814.1"/>
    <property type="status" value="JOINED"/>
    <property type="molecule type" value="Genomic_DNA"/>
</dbReference>
<dbReference type="EMBL" id="AF139404">
    <property type="protein sequence ID" value="AAF61814.1"/>
    <property type="status" value="JOINED"/>
    <property type="molecule type" value="Genomic_DNA"/>
</dbReference>
<dbReference type="EMBL" id="BC003823">
    <property type="protein sequence ID" value="AAH03823.1"/>
    <property type="molecule type" value="mRNA"/>
</dbReference>
<dbReference type="CCDS" id="CCDS22411.1"/>
<dbReference type="PIR" id="S19693">
    <property type="entry name" value="S19693"/>
</dbReference>
<dbReference type="RefSeq" id="NP_031482.1">
    <property type="nucleotide sequence ID" value="NM_007456.5"/>
</dbReference>
<dbReference type="PDB" id="1W63">
    <property type="method" value="X-ray"/>
    <property type="resolution" value="4.00 A"/>
    <property type="chains" value="M/N/O/P/R/V=1-423"/>
</dbReference>
<dbReference type="PDB" id="4EMZ">
    <property type="method" value="X-ray"/>
    <property type="resolution" value="2.90 A"/>
    <property type="chains" value="A/M=158-423"/>
</dbReference>
<dbReference type="PDB" id="4EN2">
    <property type="method" value="X-ray"/>
    <property type="resolution" value="2.58 A"/>
    <property type="chains" value="A/M=158-423"/>
</dbReference>
<dbReference type="PDB" id="4HMY">
    <property type="method" value="X-ray"/>
    <property type="resolution" value="7.00 A"/>
    <property type="chains" value="M=1-423"/>
</dbReference>
<dbReference type="PDB" id="4P6Z">
    <property type="method" value="X-ray"/>
    <property type="resolution" value="3.00 A"/>
    <property type="chains" value="M=1-423"/>
</dbReference>
<dbReference type="PDB" id="6CM9">
    <property type="method" value="EM"/>
    <property type="resolution" value="3.73 A"/>
    <property type="chains" value="M=1-423"/>
</dbReference>
<dbReference type="PDB" id="6CRI">
    <property type="method" value="EM"/>
    <property type="resolution" value="6.80 A"/>
    <property type="chains" value="M/W/X=2-423"/>
</dbReference>
<dbReference type="PDB" id="6D83">
    <property type="method" value="EM"/>
    <property type="resolution" value="4.27 A"/>
    <property type="chains" value="M=1-423"/>
</dbReference>
<dbReference type="PDB" id="6D84">
    <property type="method" value="EM"/>
    <property type="resolution" value="6.72 A"/>
    <property type="chains" value="M/P=1-423"/>
</dbReference>
<dbReference type="PDB" id="6DFF">
    <property type="method" value="EM"/>
    <property type="resolution" value="3.90 A"/>
    <property type="chains" value="M=1-423"/>
</dbReference>
<dbReference type="PDB" id="7R4H">
    <property type="method" value="EM"/>
    <property type="resolution" value="2.34 A"/>
    <property type="chains" value="M=1-423"/>
</dbReference>
<dbReference type="PDB" id="7UX3">
    <property type="method" value="EM"/>
    <property type="resolution" value="9.60 A"/>
    <property type="chains" value="M=2-423"/>
</dbReference>
<dbReference type="PDB" id="8D4C">
    <property type="method" value="EM"/>
    <property type="resolution" value="9.30 A"/>
    <property type="chains" value="J/M=1-423"/>
</dbReference>
<dbReference type="PDB" id="8D4D">
    <property type="method" value="EM"/>
    <property type="resolution" value="9.60 A"/>
    <property type="chains" value="J/M=1-423"/>
</dbReference>
<dbReference type="PDB" id="8D4E">
    <property type="method" value="EM"/>
    <property type="resolution" value="9.20 A"/>
    <property type="chains" value="M=2-423"/>
</dbReference>
<dbReference type="PDB" id="8D4F">
    <property type="method" value="EM"/>
    <property type="resolution" value="9.80 A"/>
    <property type="chains" value="J/M=1-423"/>
</dbReference>
<dbReference type="PDB" id="8D4G">
    <property type="method" value="EM"/>
    <property type="resolution" value="11.60 A"/>
    <property type="chains" value="J/M=1-423"/>
</dbReference>
<dbReference type="PDB" id="8D9R">
    <property type="method" value="EM"/>
    <property type="resolution" value="20.00 A"/>
    <property type="chains" value="M/j/k/l/m/n=1-423"/>
</dbReference>
<dbReference type="PDB" id="8D9S">
    <property type="method" value="EM"/>
    <property type="resolution" value="20.00 A"/>
    <property type="chains" value="M/j/k/l/m/n=1-423"/>
</dbReference>
<dbReference type="PDB" id="8D9T">
    <property type="method" value="EM"/>
    <property type="resolution" value="20.00 A"/>
    <property type="chains" value="M/i/j/k/l/m=1-423"/>
</dbReference>
<dbReference type="PDB" id="8D9U">
    <property type="method" value="EM"/>
    <property type="resolution" value="20.00 A"/>
    <property type="chains" value="M/i/j/k/l/m=1-423"/>
</dbReference>
<dbReference type="PDB" id="8D9V">
    <property type="method" value="EM"/>
    <property type="resolution" value="9.40 A"/>
    <property type="chains" value="J/M=1-423"/>
</dbReference>
<dbReference type="PDB" id="8D9W">
    <property type="method" value="EM"/>
    <property type="resolution" value="9.30 A"/>
    <property type="chains" value="M/X/Z/a=1-423"/>
</dbReference>
<dbReference type="PDBsum" id="1W63"/>
<dbReference type="PDBsum" id="4EMZ"/>
<dbReference type="PDBsum" id="4EN2"/>
<dbReference type="PDBsum" id="4HMY"/>
<dbReference type="PDBsum" id="4P6Z"/>
<dbReference type="PDBsum" id="6CM9"/>
<dbReference type="PDBsum" id="6CRI"/>
<dbReference type="PDBsum" id="6D83"/>
<dbReference type="PDBsum" id="6D84"/>
<dbReference type="PDBsum" id="6DFF"/>
<dbReference type="PDBsum" id="7R4H"/>
<dbReference type="PDBsum" id="7UX3"/>
<dbReference type="PDBsum" id="8D4C"/>
<dbReference type="PDBsum" id="8D4D"/>
<dbReference type="PDBsum" id="8D4E"/>
<dbReference type="PDBsum" id="8D4F"/>
<dbReference type="PDBsum" id="8D4G"/>
<dbReference type="PDBsum" id="8D9R"/>
<dbReference type="PDBsum" id="8D9S"/>
<dbReference type="PDBsum" id="8D9T"/>
<dbReference type="PDBsum" id="8D9U"/>
<dbReference type="PDBsum" id="8D9V"/>
<dbReference type="PDBsum" id="8D9W"/>
<dbReference type="EMDB" id="EMD-14312"/>
<dbReference type="EMDB" id="EMD-26853"/>
<dbReference type="EMDB" id="EMD-27181"/>
<dbReference type="EMDB" id="EMD-27182"/>
<dbReference type="EMDB" id="EMD-27183"/>
<dbReference type="EMDB" id="EMD-27184"/>
<dbReference type="EMDB" id="EMD-27185"/>
<dbReference type="EMDB" id="EMD-7563"/>
<dbReference type="SMR" id="P35585"/>
<dbReference type="BioGRID" id="198125">
    <property type="interactions" value="17"/>
</dbReference>
<dbReference type="ComplexPortal" id="CPX-5141">
    <property type="entry name" value="Ubiquitous AP-1 Adaptor complex, sigma1a variant"/>
</dbReference>
<dbReference type="ComplexPortal" id="CPX-5142">
    <property type="entry name" value="Ubiquitous AP-1 Adaptor complex, sigma1b variant"/>
</dbReference>
<dbReference type="ComplexPortal" id="CPX-5143">
    <property type="entry name" value="Ubiquitous AP-1 Adaptor complex, sigma1c variant"/>
</dbReference>
<dbReference type="CORUM" id="P35585"/>
<dbReference type="DIP" id="DIP-35323N"/>
<dbReference type="FunCoup" id="P35585">
    <property type="interactions" value="3712"/>
</dbReference>
<dbReference type="IntAct" id="P35585">
    <property type="interactions" value="9"/>
</dbReference>
<dbReference type="STRING" id="10090.ENSMUSP00000003117"/>
<dbReference type="GlyGen" id="P35585">
    <property type="glycosylation" value="1 site, 1 O-linked glycan (1 site)"/>
</dbReference>
<dbReference type="iPTMnet" id="P35585"/>
<dbReference type="PhosphoSitePlus" id="P35585"/>
<dbReference type="SwissPalm" id="P35585"/>
<dbReference type="jPOST" id="P35585"/>
<dbReference type="PaxDb" id="10090-ENSMUSP00000003117"/>
<dbReference type="PeptideAtlas" id="P35585"/>
<dbReference type="ProteomicsDB" id="296263"/>
<dbReference type="Pumba" id="P35585"/>
<dbReference type="Antibodypedia" id="27330">
    <property type="antibodies" value="172 antibodies from 27 providers"/>
</dbReference>
<dbReference type="DNASU" id="11767"/>
<dbReference type="Ensembl" id="ENSMUST00000003117.15">
    <property type="protein sequence ID" value="ENSMUSP00000003117.9"/>
    <property type="gene ID" value="ENSMUSG00000003033.16"/>
</dbReference>
<dbReference type="GeneID" id="11767"/>
<dbReference type="KEGG" id="mmu:11767"/>
<dbReference type="UCSC" id="uc009mfp.1">
    <property type="organism name" value="mouse"/>
</dbReference>
<dbReference type="AGR" id="MGI:102776"/>
<dbReference type="CTD" id="8907"/>
<dbReference type="MGI" id="MGI:102776">
    <property type="gene designation" value="Ap1m1"/>
</dbReference>
<dbReference type="VEuPathDB" id="HostDB:ENSMUSG00000003033"/>
<dbReference type="eggNOG" id="KOG0937">
    <property type="taxonomic scope" value="Eukaryota"/>
</dbReference>
<dbReference type="GeneTree" id="ENSGT00940000157924"/>
<dbReference type="HOGENOM" id="CLU_026996_0_2_1"/>
<dbReference type="InParanoid" id="P35585"/>
<dbReference type="OMA" id="KPLIWCD"/>
<dbReference type="OrthoDB" id="10259133at2759"/>
<dbReference type="PhylomeDB" id="P35585"/>
<dbReference type="TreeFam" id="TF300393"/>
<dbReference type="Reactome" id="R-MMU-2132295">
    <property type="pathway name" value="MHC class II antigen presentation"/>
</dbReference>
<dbReference type="Reactome" id="R-MMU-432720">
    <property type="pathway name" value="Lysosome Vesicle Biogenesis"/>
</dbReference>
<dbReference type="Reactome" id="R-MMU-432722">
    <property type="pathway name" value="Golgi Associated Vesicle Biogenesis"/>
</dbReference>
<dbReference type="Reactome" id="R-MMU-6798695">
    <property type="pathway name" value="Neutrophil degranulation"/>
</dbReference>
<dbReference type="BioGRID-ORCS" id="11767">
    <property type="hits" value="18 hits in 81 CRISPR screens"/>
</dbReference>
<dbReference type="EvolutionaryTrace" id="P35585"/>
<dbReference type="PRO" id="PR:P35585"/>
<dbReference type="Proteomes" id="UP000000589">
    <property type="component" value="Chromosome 8"/>
</dbReference>
<dbReference type="RNAct" id="P35585">
    <property type="molecule type" value="protein"/>
</dbReference>
<dbReference type="Bgee" id="ENSMUSG00000003033">
    <property type="expression patterns" value="Expressed in seminiferous tubule of testis and 267 other cell types or tissues"/>
</dbReference>
<dbReference type="ExpressionAtlas" id="P35585">
    <property type="expression patterns" value="baseline and differential"/>
</dbReference>
<dbReference type="GO" id="GO:0030121">
    <property type="term" value="C:AP-1 adaptor complex"/>
    <property type="evidence" value="ECO:0000303"/>
    <property type="project" value="ComplexPortal"/>
</dbReference>
<dbReference type="GO" id="GO:0005829">
    <property type="term" value="C:cytosol"/>
    <property type="evidence" value="ECO:0007669"/>
    <property type="project" value="Ensembl"/>
</dbReference>
<dbReference type="GO" id="GO:0005769">
    <property type="term" value="C:early endosome"/>
    <property type="evidence" value="ECO:0000303"/>
    <property type="project" value="ComplexPortal"/>
</dbReference>
<dbReference type="GO" id="GO:0005765">
    <property type="term" value="C:lysosomal membrane"/>
    <property type="evidence" value="ECO:0000303"/>
    <property type="project" value="ComplexPortal"/>
</dbReference>
<dbReference type="GO" id="GO:0045202">
    <property type="term" value="C:synapse"/>
    <property type="evidence" value="ECO:0000314"/>
    <property type="project" value="SynGO"/>
</dbReference>
<dbReference type="GO" id="GO:0005802">
    <property type="term" value="C:trans-Golgi network"/>
    <property type="evidence" value="ECO:0000304"/>
    <property type="project" value="MGI"/>
</dbReference>
<dbReference type="GO" id="GO:0032588">
    <property type="term" value="C:trans-Golgi network membrane"/>
    <property type="evidence" value="ECO:0000303"/>
    <property type="project" value="ComplexPortal"/>
</dbReference>
<dbReference type="GO" id="GO:0035646">
    <property type="term" value="P:endosome to melanosome transport"/>
    <property type="evidence" value="ECO:0007669"/>
    <property type="project" value="Ensembl"/>
</dbReference>
<dbReference type="GO" id="GO:0006886">
    <property type="term" value="P:intracellular protein transport"/>
    <property type="evidence" value="ECO:0000304"/>
    <property type="project" value="MGI"/>
</dbReference>
<dbReference type="GO" id="GO:1903232">
    <property type="term" value="P:melanosome assembly"/>
    <property type="evidence" value="ECO:0000303"/>
    <property type="project" value="ComplexPortal"/>
</dbReference>
<dbReference type="GO" id="GO:0060155">
    <property type="term" value="P:platelet dense granule organization"/>
    <property type="evidence" value="ECO:0000303"/>
    <property type="project" value="ComplexPortal"/>
</dbReference>
<dbReference type="GO" id="GO:0016192">
    <property type="term" value="P:vesicle-mediated transport"/>
    <property type="evidence" value="ECO:0000304"/>
    <property type="project" value="MGI"/>
</dbReference>
<dbReference type="CDD" id="cd09258">
    <property type="entry name" value="AP-1_Mu1A_Cterm"/>
    <property type="match status" value="1"/>
</dbReference>
<dbReference type="CDD" id="cd14835">
    <property type="entry name" value="AP1_Mu_N"/>
    <property type="match status" value="1"/>
</dbReference>
<dbReference type="DisProt" id="DP02898"/>
<dbReference type="FunFam" id="2.60.40.1170:FF:000002">
    <property type="entry name" value="AP-1 complex subunit mu-1 isoform 1"/>
    <property type="match status" value="1"/>
</dbReference>
<dbReference type="FunFam" id="3.30.450.60:FF:000006">
    <property type="entry name" value="AP-1 complex subunit mu-1 isoform 1"/>
    <property type="match status" value="1"/>
</dbReference>
<dbReference type="Gene3D" id="3.30.450.60">
    <property type="match status" value="1"/>
</dbReference>
<dbReference type="Gene3D" id="2.60.40.1170">
    <property type="entry name" value="Mu homology domain, subdomain B"/>
    <property type="match status" value="2"/>
</dbReference>
<dbReference type="InterPro" id="IPR050431">
    <property type="entry name" value="Adaptor_comp_med_subunit"/>
</dbReference>
<dbReference type="InterPro" id="IPR036168">
    <property type="entry name" value="AP2_Mu_C_sf"/>
</dbReference>
<dbReference type="InterPro" id="IPR022775">
    <property type="entry name" value="AP_mu_sigma_su"/>
</dbReference>
<dbReference type="InterPro" id="IPR001392">
    <property type="entry name" value="Clathrin_mu"/>
</dbReference>
<dbReference type="InterPro" id="IPR018240">
    <property type="entry name" value="Clathrin_mu_CS"/>
</dbReference>
<dbReference type="InterPro" id="IPR011012">
    <property type="entry name" value="Longin-like_dom_sf"/>
</dbReference>
<dbReference type="InterPro" id="IPR028565">
    <property type="entry name" value="MHD"/>
</dbReference>
<dbReference type="PANTHER" id="PTHR10529">
    <property type="entry name" value="AP COMPLEX SUBUNIT MU"/>
    <property type="match status" value="1"/>
</dbReference>
<dbReference type="Pfam" id="PF00928">
    <property type="entry name" value="Adap_comp_sub"/>
    <property type="match status" value="1"/>
</dbReference>
<dbReference type="Pfam" id="PF01217">
    <property type="entry name" value="Clat_adaptor_s"/>
    <property type="match status" value="1"/>
</dbReference>
<dbReference type="PIRSF" id="PIRSF005992">
    <property type="entry name" value="Clathrin_mu"/>
    <property type="match status" value="1"/>
</dbReference>
<dbReference type="PRINTS" id="PR00314">
    <property type="entry name" value="CLATHRINADPT"/>
</dbReference>
<dbReference type="SUPFAM" id="SSF49447">
    <property type="entry name" value="Second domain of Mu2 adaptin subunit (ap50) of ap2 adaptor"/>
    <property type="match status" value="1"/>
</dbReference>
<dbReference type="SUPFAM" id="SSF64356">
    <property type="entry name" value="SNARE-like"/>
    <property type="match status" value="1"/>
</dbReference>
<dbReference type="PROSITE" id="PS00990">
    <property type="entry name" value="CLAT_ADAPTOR_M_1"/>
    <property type="match status" value="1"/>
</dbReference>
<dbReference type="PROSITE" id="PS00991">
    <property type="entry name" value="CLAT_ADAPTOR_M_2"/>
    <property type="match status" value="1"/>
</dbReference>
<dbReference type="PROSITE" id="PS51072">
    <property type="entry name" value="MHD"/>
    <property type="match status" value="1"/>
</dbReference>